<comment type="catalytic activity">
    <reaction>
        <text>D-arabinose 5-phosphate + phosphoenolpyruvate + H2O = 3-deoxy-alpha-D-manno-2-octulosonate-8-phosphate + phosphate</text>
        <dbReference type="Rhea" id="RHEA:14053"/>
        <dbReference type="ChEBI" id="CHEBI:15377"/>
        <dbReference type="ChEBI" id="CHEBI:43474"/>
        <dbReference type="ChEBI" id="CHEBI:57693"/>
        <dbReference type="ChEBI" id="CHEBI:58702"/>
        <dbReference type="ChEBI" id="CHEBI:85985"/>
        <dbReference type="EC" id="2.5.1.55"/>
    </reaction>
</comment>
<comment type="pathway">
    <text>Carbohydrate biosynthesis; 3-deoxy-D-manno-octulosonate biosynthesis; 3-deoxy-D-manno-octulosonate from D-ribulose 5-phosphate: step 2/3.</text>
</comment>
<comment type="pathway">
    <text>Bacterial outer membrane biogenesis; lipopolysaccharide biosynthesis.</text>
</comment>
<comment type="subcellular location">
    <subcellularLocation>
        <location evidence="1">Cytoplasm</location>
    </subcellularLocation>
</comment>
<comment type="similarity">
    <text evidence="2">Belongs to the KdsA family.</text>
</comment>
<name>KDSA_RICPR</name>
<feature type="chain" id="PRO_0000187160" description="2-dehydro-3-deoxyphosphooctonate aldolase">
    <location>
        <begin position="1"/>
        <end position="275"/>
    </location>
</feature>
<gene>
    <name type="primary">kdsA</name>
    <name type="ordered locus">RP062</name>
</gene>
<accession>Q9ZE84</accession>
<keyword id="KW-0963">Cytoplasm</keyword>
<keyword id="KW-0448">Lipopolysaccharide biosynthesis</keyword>
<keyword id="KW-1185">Reference proteome</keyword>
<keyword id="KW-0808">Transferase</keyword>
<reference key="1">
    <citation type="journal article" date="1998" name="Nature">
        <title>The genome sequence of Rickettsia prowazekii and the origin of mitochondria.</title>
        <authorList>
            <person name="Andersson S.G.E."/>
            <person name="Zomorodipour A."/>
            <person name="Andersson J.O."/>
            <person name="Sicheritz-Ponten T."/>
            <person name="Alsmark U.C.M."/>
            <person name="Podowski R.M."/>
            <person name="Naeslund A.K."/>
            <person name="Eriksson A.-S."/>
            <person name="Winkler H.H."/>
            <person name="Kurland C.G."/>
        </authorList>
    </citation>
    <scope>NUCLEOTIDE SEQUENCE [LARGE SCALE GENOMIC DNA]</scope>
    <source>
        <strain>Madrid E</strain>
    </source>
</reference>
<organism>
    <name type="scientific">Rickettsia prowazekii (strain Madrid E)</name>
    <dbReference type="NCBI Taxonomy" id="272947"/>
    <lineage>
        <taxon>Bacteria</taxon>
        <taxon>Pseudomonadati</taxon>
        <taxon>Pseudomonadota</taxon>
        <taxon>Alphaproteobacteria</taxon>
        <taxon>Rickettsiales</taxon>
        <taxon>Rickettsiaceae</taxon>
        <taxon>Rickettsieae</taxon>
        <taxon>Rickettsia</taxon>
        <taxon>typhus group</taxon>
    </lineage>
</organism>
<proteinExistence type="inferred from homology"/>
<sequence length="275" mass="30246">MKKVVKLNNIKIGNDLQFVLIAGPCQIEGKDHALFMAEKLMKLTSKLSIPFIYKSSFDKANRTSINGIRGLGIEKGLEILSKVKSEFDCPIITDVHSESQCIETAKVVDILQIPAFLCRQTDLLKAAAKTGKIVKVKKGQFLAPWDMKNVQKKLEVFGAKDILFTERGSCFGYNNLVSDMRSLAIMSELNVPVVFDATHSVQQPGGRGGSSGGERKYVELLAKAAISVGIAGIYMEVHQDPDNAPSDGPCMIKLDNLESILIKLKKYDKITKEIV</sequence>
<dbReference type="EC" id="2.5.1.55"/>
<dbReference type="EMBL" id="AJ235270">
    <property type="protein sequence ID" value="CAA14533.1"/>
    <property type="molecule type" value="Genomic_DNA"/>
</dbReference>
<dbReference type="PIR" id="F71714">
    <property type="entry name" value="F71714"/>
</dbReference>
<dbReference type="RefSeq" id="NP_220456.1">
    <property type="nucleotide sequence ID" value="NC_000963.1"/>
</dbReference>
<dbReference type="RefSeq" id="WP_004596582.1">
    <property type="nucleotide sequence ID" value="NC_000963.1"/>
</dbReference>
<dbReference type="SMR" id="Q9ZE84"/>
<dbReference type="STRING" id="272947.gene:17555145"/>
<dbReference type="EnsemblBacteria" id="CAA14533">
    <property type="protein sequence ID" value="CAA14533"/>
    <property type="gene ID" value="CAA14533"/>
</dbReference>
<dbReference type="GeneID" id="57569190"/>
<dbReference type="KEGG" id="rpr:RP062"/>
<dbReference type="PATRIC" id="fig|272947.5.peg.63"/>
<dbReference type="eggNOG" id="COG2877">
    <property type="taxonomic scope" value="Bacteria"/>
</dbReference>
<dbReference type="HOGENOM" id="CLU_036666_0_0_5"/>
<dbReference type="OrthoDB" id="9776934at2"/>
<dbReference type="BRENDA" id="2.5.1.55">
    <property type="organism ID" value="5447"/>
</dbReference>
<dbReference type="UniPathway" id="UPA00030"/>
<dbReference type="UniPathway" id="UPA00357">
    <property type="reaction ID" value="UER00474"/>
</dbReference>
<dbReference type="Proteomes" id="UP000002480">
    <property type="component" value="Chromosome"/>
</dbReference>
<dbReference type="GO" id="GO:0005737">
    <property type="term" value="C:cytoplasm"/>
    <property type="evidence" value="ECO:0007669"/>
    <property type="project" value="UniProtKB-SubCell"/>
</dbReference>
<dbReference type="GO" id="GO:0008676">
    <property type="term" value="F:3-deoxy-8-phosphooctulonate synthase activity"/>
    <property type="evidence" value="ECO:0007669"/>
    <property type="project" value="UniProtKB-UniRule"/>
</dbReference>
<dbReference type="GO" id="GO:0019294">
    <property type="term" value="P:keto-3-deoxy-D-manno-octulosonic acid biosynthetic process"/>
    <property type="evidence" value="ECO:0007669"/>
    <property type="project" value="UniProtKB-UniRule"/>
</dbReference>
<dbReference type="Gene3D" id="3.20.20.70">
    <property type="entry name" value="Aldolase class I"/>
    <property type="match status" value="1"/>
</dbReference>
<dbReference type="HAMAP" id="MF_00056">
    <property type="entry name" value="KDO8P_synth"/>
    <property type="match status" value="1"/>
</dbReference>
<dbReference type="InterPro" id="IPR013785">
    <property type="entry name" value="Aldolase_TIM"/>
</dbReference>
<dbReference type="InterPro" id="IPR006218">
    <property type="entry name" value="DAHP1/KDSA"/>
</dbReference>
<dbReference type="InterPro" id="IPR006269">
    <property type="entry name" value="KDO8P_synthase"/>
</dbReference>
<dbReference type="NCBIfam" id="TIGR01362">
    <property type="entry name" value="KDO8P_synth"/>
    <property type="match status" value="1"/>
</dbReference>
<dbReference type="NCBIfam" id="NF003543">
    <property type="entry name" value="PRK05198.1"/>
    <property type="match status" value="1"/>
</dbReference>
<dbReference type="PANTHER" id="PTHR21057">
    <property type="entry name" value="PHOSPHO-2-DEHYDRO-3-DEOXYHEPTONATE ALDOLASE"/>
    <property type="match status" value="1"/>
</dbReference>
<dbReference type="Pfam" id="PF00793">
    <property type="entry name" value="DAHP_synth_1"/>
    <property type="match status" value="1"/>
</dbReference>
<dbReference type="SUPFAM" id="SSF51569">
    <property type="entry name" value="Aldolase"/>
    <property type="match status" value="1"/>
</dbReference>
<protein>
    <recommendedName>
        <fullName>2-dehydro-3-deoxyphosphooctonate aldolase</fullName>
        <ecNumber>2.5.1.55</ecNumber>
    </recommendedName>
    <alternativeName>
        <fullName>3-deoxy-D-manno-octulosonic acid 8-phosphate synthase</fullName>
    </alternativeName>
    <alternativeName>
        <fullName>KDO-8-phosphate synthase</fullName>
        <shortName>KDO 8-P synthase</shortName>
        <shortName>KDOPS</shortName>
    </alternativeName>
    <alternativeName>
        <fullName>Phospho-2-dehydro-3-deoxyoctonate aldolase</fullName>
    </alternativeName>
</protein>
<evidence type="ECO:0000250" key="1"/>
<evidence type="ECO:0000305" key="2"/>